<proteinExistence type="inferred from homology"/>
<organism>
    <name type="scientific">Salmonella enteritidis PT4 (strain P125109)</name>
    <dbReference type="NCBI Taxonomy" id="550537"/>
    <lineage>
        <taxon>Bacteria</taxon>
        <taxon>Pseudomonadati</taxon>
        <taxon>Pseudomonadota</taxon>
        <taxon>Gammaproteobacteria</taxon>
        <taxon>Enterobacterales</taxon>
        <taxon>Enterobacteriaceae</taxon>
        <taxon>Salmonella</taxon>
    </lineage>
</organism>
<feature type="chain" id="PRO_1000137235" description="Uncharacterized MFS-type transporter YhhS">
    <location>
        <begin position="1"/>
        <end position="405"/>
    </location>
</feature>
<feature type="transmembrane region" description="Helical" evidence="1">
    <location>
        <begin position="19"/>
        <end position="39"/>
    </location>
</feature>
<feature type="transmembrane region" description="Helical" evidence="1">
    <location>
        <begin position="48"/>
        <end position="68"/>
    </location>
</feature>
<feature type="transmembrane region" description="Helical" evidence="1">
    <location>
        <begin position="85"/>
        <end position="105"/>
    </location>
</feature>
<feature type="transmembrane region" description="Helical" evidence="1">
    <location>
        <begin position="106"/>
        <end position="126"/>
    </location>
</feature>
<feature type="transmembrane region" description="Helical" evidence="1">
    <location>
        <begin position="129"/>
        <end position="149"/>
    </location>
</feature>
<feature type="transmembrane region" description="Helical" evidence="1">
    <location>
        <begin position="156"/>
        <end position="176"/>
    </location>
</feature>
<feature type="transmembrane region" description="Helical" evidence="1">
    <location>
        <begin position="178"/>
        <end position="198"/>
    </location>
</feature>
<feature type="transmembrane region" description="Helical" evidence="1">
    <location>
        <begin position="224"/>
        <end position="244"/>
    </location>
</feature>
<feature type="transmembrane region" description="Helical" evidence="1">
    <location>
        <begin position="252"/>
        <end position="272"/>
    </location>
</feature>
<feature type="transmembrane region" description="Helical" evidence="1">
    <location>
        <begin position="283"/>
        <end position="303"/>
    </location>
</feature>
<feature type="transmembrane region" description="Helical" evidence="1">
    <location>
        <begin position="309"/>
        <end position="329"/>
    </location>
</feature>
<feature type="transmembrane region" description="Helical" evidence="1">
    <location>
        <begin position="344"/>
        <end position="364"/>
    </location>
</feature>
<feature type="transmembrane region" description="Helical" evidence="1">
    <location>
        <begin position="366"/>
        <end position="386"/>
    </location>
</feature>
<evidence type="ECO:0000255" key="1">
    <source>
        <dbReference type="HAMAP-Rule" id="MF_01118"/>
    </source>
</evidence>
<sequence>MPEPVAEPALNGLRLNLRIVSIVMFNFASYLTIGLPLAVLPGYVHDAMGFSAFWAGLIISLQYFATLLSRPHAGRYADVLGPKKIVVFGLCGCFLSGLGYLLADIASAWPMISLLLLGLGRVILGIGQSFAGTGSTLWGVGVVGSLHIGRVISWNGIVTYGAMAMGAPLGVLCYAWGGLQGLALTVMGVALLAVLLALPRPSVKANKGKPLPFRAVLGRVWLYGMALALASAGFGVIATFITLFYDAKGWDGAAFALTLFSVAFVGTRLLFPNGINRLGGLNVAMICFGVEIIGLLLVGTAAMPWMAKIGVLLTGMGFSLVFPALGVVAVKAVPPQNQGAALATYTVFMDMSLGVTGPLAGLVMTWAGVPVIYLAAAGLVAMALLLTWRLKKRPPSALPEAASSS</sequence>
<reference key="1">
    <citation type="journal article" date="2008" name="Genome Res.">
        <title>Comparative genome analysis of Salmonella enteritidis PT4 and Salmonella gallinarum 287/91 provides insights into evolutionary and host adaptation pathways.</title>
        <authorList>
            <person name="Thomson N.R."/>
            <person name="Clayton D.J."/>
            <person name="Windhorst D."/>
            <person name="Vernikos G."/>
            <person name="Davidson S."/>
            <person name="Churcher C."/>
            <person name="Quail M.A."/>
            <person name="Stevens M."/>
            <person name="Jones M.A."/>
            <person name="Watson M."/>
            <person name="Barron A."/>
            <person name="Layton A."/>
            <person name="Pickard D."/>
            <person name="Kingsley R.A."/>
            <person name="Bignell A."/>
            <person name="Clark L."/>
            <person name="Harris B."/>
            <person name="Ormond D."/>
            <person name="Abdellah Z."/>
            <person name="Brooks K."/>
            <person name="Cherevach I."/>
            <person name="Chillingworth T."/>
            <person name="Woodward J."/>
            <person name="Norberczak H."/>
            <person name="Lord A."/>
            <person name="Arrowsmith C."/>
            <person name="Jagels K."/>
            <person name="Moule S."/>
            <person name="Mungall K."/>
            <person name="Saunders M."/>
            <person name="Whitehead S."/>
            <person name="Chabalgoity J.A."/>
            <person name="Maskell D."/>
            <person name="Humphreys T."/>
            <person name="Roberts M."/>
            <person name="Barrow P.A."/>
            <person name="Dougan G."/>
            <person name="Parkhill J."/>
        </authorList>
    </citation>
    <scope>NUCLEOTIDE SEQUENCE [LARGE SCALE GENOMIC DNA]</scope>
    <source>
        <strain>P125109</strain>
    </source>
</reference>
<accession>B5R3Y2</accession>
<keyword id="KW-0997">Cell inner membrane</keyword>
<keyword id="KW-1003">Cell membrane</keyword>
<keyword id="KW-0472">Membrane</keyword>
<keyword id="KW-0812">Transmembrane</keyword>
<keyword id="KW-1133">Transmembrane helix</keyword>
<keyword id="KW-0813">Transport</keyword>
<dbReference type="EMBL" id="AM933172">
    <property type="protein sequence ID" value="CAR34980.1"/>
    <property type="molecule type" value="Genomic_DNA"/>
</dbReference>
<dbReference type="SMR" id="B5R3Y2"/>
<dbReference type="KEGG" id="set:SEN3404"/>
<dbReference type="HOGENOM" id="CLU_001265_10_3_6"/>
<dbReference type="Proteomes" id="UP000000613">
    <property type="component" value="Chromosome"/>
</dbReference>
<dbReference type="GO" id="GO:0005886">
    <property type="term" value="C:plasma membrane"/>
    <property type="evidence" value="ECO:0007669"/>
    <property type="project" value="UniProtKB-SubCell"/>
</dbReference>
<dbReference type="GO" id="GO:0022857">
    <property type="term" value="F:transmembrane transporter activity"/>
    <property type="evidence" value="ECO:0007669"/>
    <property type="project" value="UniProtKB-UniRule"/>
</dbReference>
<dbReference type="CDD" id="cd17489">
    <property type="entry name" value="MFS_YfcJ_like"/>
    <property type="match status" value="1"/>
</dbReference>
<dbReference type="FunFam" id="1.20.1250.20:FF:000155">
    <property type="entry name" value="Uncharacterized MFS-type transporter YhhS"/>
    <property type="match status" value="1"/>
</dbReference>
<dbReference type="Gene3D" id="1.20.1250.20">
    <property type="entry name" value="MFS general substrate transporter like domains"/>
    <property type="match status" value="1"/>
</dbReference>
<dbReference type="HAMAP" id="MF_01118">
    <property type="entry name" value="MFS_YhhS"/>
    <property type="match status" value="1"/>
</dbReference>
<dbReference type="InterPro" id="IPR011701">
    <property type="entry name" value="MFS"/>
</dbReference>
<dbReference type="InterPro" id="IPR020846">
    <property type="entry name" value="MFS_dom"/>
</dbReference>
<dbReference type="InterPro" id="IPR036259">
    <property type="entry name" value="MFS_trans_sf"/>
</dbReference>
<dbReference type="InterPro" id="IPR050171">
    <property type="entry name" value="MFS_Transporters"/>
</dbReference>
<dbReference type="InterPro" id="IPR023008">
    <property type="entry name" value="MFS_YhhS-like"/>
</dbReference>
<dbReference type="NCBIfam" id="NF003477">
    <property type="entry name" value="PRK05122.1"/>
    <property type="match status" value="1"/>
</dbReference>
<dbReference type="PANTHER" id="PTHR23517:SF13">
    <property type="entry name" value="MAJOR FACILITATOR SUPERFAMILY MFS_1"/>
    <property type="match status" value="1"/>
</dbReference>
<dbReference type="PANTHER" id="PTHR23517">
    <property type="entry name" value="RESISTANCE PROTEIN MDTM, PUTATIVE-RELATED-RELATED"/>
    <property type="match status" value="1"/>
</dbReference>
<dbReference type="Pfam" id="PF07690">
    <property type="entry name" value="MFS_1"/>
    <property type="match status" value="1"/>
</dbReference>
<dbReference type="SUPFAM" id="SSF103473">
    <property type="entry name" value="MFS general substrate transporter"/>
    <property type="match status" value="1"/>
</dbReference>
<dbReference type="PROSITE" id="PS50850">
    <property type="entry name" value="MFS"/>
    <property type="match status" value="1"/>
</dbReference>
<comment type="subcellular location">
    <subcellularLocation>
        <location evidence="1">Cell inner membrane</location>
        <topology evidence="1">Multi-pass membrane protein</topology>
    </subcellularLocation>
</comment>
<comment type="similarity">
    <text evidence="1">Belongs to the major facilitator superfamily. YhhS family.</text>
</comment>
<name>YHHS_SALEP</name>
<protein>
    <recommendedName>
        <fullName evidence="1">Uncharacterized MFS-type transporter YhhS</fullName>
    </recommendedName>
</protein>
<gene>
    <name type="ordered locus">SEN3404</name>
</gene>